<dbReference type="EC" id="3.1.1.29" evidence="1"/>
<dbReference type="EMBL" id="CP000235">
    <property type="protein sequence ID" value="ABD44175.1"/>
    <property type="molecule type" value="Genomic_DNA"/>
</dbReference>
<dbReference type="RefSeq" id="WP_011451322.1">
    <property type="nucleotide sequence ID" value="NC_007797.1"/>
</dbReference>
<dbReference type="SMR" id="Q2GII6"/>
<dbReference type="STRING" id="212042.APH_1301"/>
<dbReference type="PaxDb" id="212042-APH_1301"/>
<dbReference type="EnsemblBacteria" id="ABD44175">
    <property type="protein sequence ID" value="ABD44175"/>
    <property type="gene ID" value="APH_1301"/>
</dbReference>
<dbReference type="GeneID" id="92747826"/>
<dbReference type="KEGG" id="aph:APH_1301"/>
<dbReference type="eggNOG" id="COG0193">
    <property type="taxonomic scope" value="Bacteria"/>
</dbReference>
<dbReference type="HOGENOM" id="CLU_062456_1_0_5"/>
<dbReference type="Proteomes" id="UP000001943">
    <property type="component" value="Chromosome"/>
</dbReference>
<dbReference type="GO" id="GO:0005737">
    <property type="term" value="C:cytoplasm"/>
    <property type="evidence" value="ECO:0007669"/>
    <property type="project" value="UniProtKB-SubCell"/>
</dbReference>
<dbReference type="GO" id="GO:0004045">
    <property type="term" value="F:peptidyl-tRNA hydrolase activity"/>
    <property type="evidence" value="ECO:0007669"/>
    <property type="project" value="UniProtKB-UniRule"/>
</dbReference>
<dbReference type="GO" id="GO:0000049">
    <property type="term" value="F:tRNA binding"/>
    <property type="evidence" value="ECO:0007669"/>
    <property type="project" value="UniProtKB-UniRule"/>
</dbReference>
<dbReference type="GO" id="GO:0006515">
    <property type="term" value="P:protein quality control for misfolded or incompletely synthesized proteins"/>
    <property type="evidence" value="ECO:0007669"/>
    <property type="project" value="UniProtKB-UniRule"/>
</dbReference>
<dbReference type="GO" id="GO:0072344">
    <property type="term" value="P:rescue of stalled ribosome"/>
    <property type="evidence" value="ECO:0007669"/>
    <property type="project" value="UniProtKB-UniRule"/>
</dbReference>
<dbReference type="CDD" id="cd00462">
    <property type="entry name" value="PTH"/>
    <property type="match status" value="1"/>
</dbReference>
<dbReference type="Gene3D" id="3.40.50.1470">
    <property type="entry name" value="Peptidyl-tRNA hydrolase"/>
    <property type="match status" value="1"/>
</dbReference>
<dbReference type="HAMAP" id="MF_00083">
    <property type="entry name" value="Pept_tRNA_hydro_bact"/>
    <property type="match status" value="1"/>
</dbReference>
<dbReference type="InterPro" id="IPR001328">
    <property type="entry name" value="Pept_tRNA_hydro"/>
</dbReference>
<dbReference type="InterPro" id="IPR018171">
    <property type="entry name" value="Pept_tRNA_hydro_CS"/>
</dbReference>
<dbReference type="InterPro" id="IPR036416">
    <property type="entry name" value="Pept_tRNA_hydro_sf"/>
</dbReference>
<dbReference type="NCBIfam" id="TIGR00447">
    <property type="entry name" value="pth"/>
    <property type="match status" value="1"/>
</dbReference>
<dbReference type="PANTHER" id="PTHR17224">
    <property type="entry name" value="PEPTIDYL-TRNA HYDROLASE"/>
    <property type="match status" value="1"/>
</dbReference>
<dbReference type="PANTHER" id="PTHR17224:SF1">
    <property type="entry name" value="PEPTIDYL-TRNA HYDROLASE"/>
    <property type="match status" value="1"/>
</dbReference>
<dbReference type="Pfam" id="PF01195">
    <property type="entry name" value="Pept_tRNA_hydro"/>
    <property type="match status" value="1"/>
</dbReference>
<dbReference type="SUPFAM" id="SSF53178">
    <property type="entry name" value="Peptidyl-tRNA hydrolase-like"/>
    <property type="match status" value="1"/>
</dbReference>
<dbReference type="PROSITE" id="PS01195">
    <property type="entry name" value="PEPT_TRNA_HYDROL_1"/>
    <property type="match status" value="1"/>
</dbReference>
<dbReference type="PROSITE" id="PS01196">
    <property type="entry name" value="PEPT_TRNA_HYDROL_2"/>
    <property type="match status" value="1"/>
</dbReference>
<name>PTH_ANAPZ</name>
<organism>
    <name type="scientific">Anaplasma phagocytophilum (strain HZ)</name>
    <dbReference type="NCBI Taxonomy" id="212042"/>
    <lineage>
        <taxon>Bacteria</taxon>
        <taxon>Pseudomonadati</taxon>
        <taxon>Pseudomonadota</taxon>
        <taxon>Alphaproteobacteria</taxon>
        <taxon>Rickettsiales</taxon>
        <taxon>Anaplasmataceae</taxon>
        <taxon>Anaplasma</taxon>
        <taxon>phagocytophilum group</taxon>
    </lineage>
</organism>
<comment type="function">
    <text evidence="1">Hydrolyzes ribosome-free peptidyl-tRNAs (with 1 or more amino acids incorporated), which drop off the ribosome during protein synthesis, or as a result of ribosome stalling.</text>
</comment>
<comment type="function">
    <text evidence="1">Catalyzes the release of premature peptidyl moieties from peptidyl-tRNA molecules trapped in stalled 50S ribosomal subunits, and thus maintains levels of free tRNAs and 50S ribosomes.</text>
</comment>
<comment type="catalytic activity">
    <reaction evidence="1">
        <text>an N-acyl-L-alpha-aminoacyl-tRNA + H2O = an N-acyl-L-amino acid + a tRNA + H(+)</text>
        <dbReference type="Rhea" id="RHEA:54448"/>
        <dbReference type="Rhea" id="RHEA-COMP:10123"/>
        <dbReference type="Rhea" id="RHEA-COMP:13883"/>
        <dbReference type="ChEBI" id="CHEBI:15377"/>
        <dbReference type="ChEBI" id="CHEBI:15378"/>
        <dbReference type="ChEBI" id="CHEBI:59874"/>
        <dbReference type="ChEBI" id="CHEBI:78442"/>
        <dbReference type="ChEBI" id="CHEBI:138191"/>
        <dbReference type="EC" id="3.1.1.29"/>
    </reaction>
</comment>
<comment type="subunit">
    <text evidence="1">Monomer.</text>
</comment>
<comment type="subcellular location">
    <subcellularLocation>
        <location evidence="1">Cytoplasm</location>
    </subcellularLocation>
</comment>
<comment type="similarity">
    <text evidence="1">Belongs to the PTH family.</text>
</comment>
<feature type="chain" id="PRO_0000264004" description="Peptidyl-tRNA hydrolase">
    <location>
        <begin position="1"/>
        <end position="183"/>
    </location>
</feature>
<feature type="active site" description="Proton acceptor" evidence="1">
    <location>
        <position position="19"/>
    </location>
</feature>
<feature type="binding site" evidence="1">
    <location>
        <position position="14"/>
    </location>
    <ligand>
        <name>tRNA</name>
        <dbReference type="ChEBI" id="CHEBI:17843"/>
    </ligand>
</feature>
<feature type="binding site" evidence="1">
    <location>
        <position position="64"/>
    </location>
    <ligand>
        <name>tRNA</name>
        <dbReference type="ChEBI" id="CHEBI:17843"/>
    </ligand>
</feature>
<feature type="binding site" evidence="1">
    <location>
        <position position="66"/>
    </location>
    <ligand>
        <name>tRNA</name>
        <dbReference type="ChEBI" id="CHEBI:17843"/>
    </ligand>
</feature>
<feature type="binding site" evidence="1">
    <location>
        <position position="112"/>
    </location>
    <ligand>
        <name>tRNA</name>
        <dbReference type="ChEBI" id="CHEBI:17843"/>
    </ligand>
</feature>
<feature type="site" description="Discriminates between blocked and unblocked aminoacyl-tRNA" evidence="1">
    <location>
        <position position="9"/>
    </location>
</feature>
<feature type="site" description="Stabilizes the basic form of H active site to accept a proton" evidence="1">
    <location>
        <position position="91"/>
    </location>
</feature>
<proteinExistence type="inferred from homology"/>
<accession>Q2GII6</accession>
<reference key="1">
    <citation type="journal article" date="2006" name="PLoS Genet.">
        <title>Comparative genomics of emerging human ehrlichiosis agents.</title>
        <authorList>
            <person name="Dunning Hotopp J.C."/>
            <person name="Lin M."/>
            <person name="Madupu R."/>
            <person name="Crabtree J."/>
            <person name="Angiuoli S.V."/>
            <person name="Eisen J.A."/>
            <person name="Seshadri R."/>
            <person name="Ren Q."/>
            <person name="Wu M."/>
            <person name="Utterback T.R."/>
            <person name="Smith S."/>
            <person name="Lewis M."/>
            <person name="Khouri H."/>
            <person name="Zhang C."/>
            <person name="Niu H."/>
            <person name="Lin Q."/>
            <person name="Ohashi N."/>
            <person name="Zhi N."/>
            <person name="Nelson W.C."/>
            <person name="Brinkac L.M."/>
            <person name="Dodson R.J."/>
            <person name="Rosovitz M.J."/>
            <person name="Sundaram J.P."/>
            <person name="Daugherty S.C."/>
            <person name="Davidsen T."/>
            <person name="Durkin A.S."/>
            <person name="Gwinn M.L."/>
            <person name="Haft D.H."/>
            <person name="Selengut J.D."/>
            <person name="Sullivan S.A."/>
            <person name="Zafar N."/>
            <person name="Zhou L."/>
            <person name="Benahmed F."/>
            <person name="Forberger H."/>
            <person name="Halpin R."/>
            <person name="Mulligan S."/>
            <person name="Robinson J."/>
            <person name="White O."/>
            <person name="Rikihisa Y."/>
            <person name="Tettelin H."/>
        </authorList>
    </citation>
    <scope>NUCLEOTIDE SEQUENCE [LARGE SCALE GENOMIC DNA]</scope>
    <source>
        <strain>HZ</strain>
    </source>
</reference>
<sequence length="183" mass="19809">MLLLVGLGNPGKRYAETRHNVGFMIIDAVARGFFFPEFCSKHDALVSIGNIGTHRVMLMKPLLYMNRSGTSVLSCTSMHKIAPEHITVFHDDVELQPGTIRVKLGGGSGGHNGLRSIDSAIGKAYWRVRFGVGRAELCNLSDYVLSDFENIAQVTDLVNSVAANLQMLLDGNAAGFVSKVTSV</sequence>
<keyword id="KW-0963">Cytoplasm</keyword>
<keyword id="KW-0378">Hydrolase</keyword>
<keyword id="KW-0694">RNA-binding</keyword>
<keyword id="KW-0820">tRNA-binding</keyword>
<gene>
    <name evidence="1" type="primary">pth</name>
    <name type="ordered locus">APH_1301</name>
</gene>
<evidence type="ECO:0000255" key="1">
    <source>
        <dbReference type="HAMAP-Rule" id="MF_00083"/>
    </source>
</evidence>
<protein>
    <recommendedName>
        <fullName evidence="1">Peptidyl-tRNA hydrolase</fullName>
        <shortName evidence="1">Pth</shortName>
        <ecNumber evidence="1">3.1.1.29</ecNumber>
    </recommendedName>
</protein>